<comment type="function">
    <text>Receptor for the tridecapeptide neurotensin. It is associated with G proteins that activate a phosphatidylinositol-calcium second messenger system.</text>
</comment>
<comment type="subcellular location">
    <subcellularLocation>
        <location>Cell membrane</location>
        <topology>Multi-pass membrane protein</topology>
    </subcellularLocation>
</comment>
<comment type="tissue specificity">
    <text evidence="5">Expressed in prostate (at protein level).</text>
</comment>
<comment type="similarity">
    <text evidence="2">Belongs to the G-protein coupled receptor 1 family. Neurotensin receptor subfamily. NTSR2 sub-subfamily.</text>
</comment>
<comment type="sequence caution" evidence="8">
    <conflict type="erroneous gene model prediction">
        <sequence resource="EMBL-CDS" id="EAX00924"/>
    </conflict>
</comment>
<comment type="online information" name="Wikipedia">
    <link uri="https://en.wikipedia.org/wiki/Neurotensin_receptor"/>
    <text>Neurotensin receptor entry</text>
</comment>
<feature type="chain" id="PRO_0000069949" description="Neurotensin receptor type 2">
    <location>
        <begin position="1"/>
        <end position="410"/>
    </location>
</feature>
<feature type="topological domain" description="Extracellular" evidence="1">
    <location>
        <begin position="1"/>
        <end position="32"/>
    </location>
</feature>
<feature type="transmembrane region" description="Helical; Name=1" evidence="1">
    <location>
        <begin position="33"/>
        <end position="55"/>
    </location>
</feature>
<feature type="topological domain" description="Cytoplasmic" evidence="1">
    <location>
        <begin position="56"/>
        <end position="64"/>
    </location>
</feature>
<feature type="transmembrane region" description="Helical; Name=2" evidence="1">
    <location>
        <begin position="65"/>
        <end position="87"/>
    </location>
</feature>
<feature type="topological domain" description="Extracellular" evidence="1">
    <location>
        <begin position="88"/>
        <end position="109"/>
    </location>
</feature>
<feature type="transmembrane region" description="Helical; Name=3" evidence="1">
    <location>
        <begin position="110"/>
        <end position="131"/>
    </location>
</feature>
<feature type="topological domain" description="Cytoplasmic" evidence="1">
    <location>
        <begin position="132"/>
        <end position="154"/>
    </location>
</feature>
<feature type="transmembrane region" description="Helical; Name=4" evidence="1">
    <location>
        <begin position="155"/>
        <end position="176"/>
    </location>
</feature>
<feature type="topological domain" description="Extracellular" evidence="1">
    <location>
        <begin position="177"/>
        <end position="217"/>
    </location>
</feature>
<feature type="transmembrane region" description="Helical; Name=5" evidence="1">
    <location>
        <begin position="218"/>
        <end position="237"/>
    </location>
</feature>
<feature type="topological domain" description="Cytoplasmic" evidence="1">
    <location>
        <begin position="238"/>
        <end position="297"/>
    </location>
</feature>
<feature type="transmembrane region" description="Helical; Name=6" evidence="1">
    <location>
        <begin position="298"/>
        <end position="318"/>
    </location>
</feature>
<feature type="topological domain" description="Extracellular" evidence="1">
    <location>
        <begin position="319"/>
        <end position="337"/>
    </location>
</feature>
<feature type="transmembrane region" description="Helical; Name=7" evidence="1">
    <location>
        <begin position="338"/>
        <end position="358"/>
    </location>
</feature>
<feature type="topological domain" description="Cytoplasmic" evidence="1">
    <location>
        <begin position="359"/>
        <end position="410"/>
    </location>
</feature>
<feature type="region of interest" description="Disordered" evidence="3">
    <location>
        <begin position="381"/>
        <end position="410"/>
    </location>
</feature>
<feature type="lipid moiety-binding region" description="S-palmitoyl cysteine" evidence="1">
    <location>
        <position position="377"/>
    </location>
</feature>
<feature type="disulfide bond" evidence="2">
    <location>
        <begin position="108"/>
        <end position="194"/>
    </location>
</feature>
<feature type="sequence variant" id="VAR_049425" description="In dbSNP:rs6432225." evidence="4 6 7">
    <original>A</original>
    <variation>V</variation>
    <location>
        <position position="54"/>
    </location>
</feature>
<feature type="sequence variant" id="VAR_061225" description="In dbSNP:rs34764121.">
    <original>R</original>
    <variation>K</variation>
    <location>
        <position position="282"/>
    </location>
</feature>
<feature type="sequence conflict" description="In Ref. 5; AAH37776." evidence="8" ref="5">
    <location>
        <begin position="109"/>
        <end position="134"/>
    </location>
</feature>
<feature type="sequence conflict" description="In Ref. 5; AAH37776." evidence="8" ref="5">
    <original>R</original>
    <variation>C</variation>
    <location>
        <position position="142"/>
    </location>
</feature>
<feature type="sequence conflict" description="In Ref. 5; AAH22501." evidence="8" ref="5">
    <original>L</original>
    <variation>M</variation>
    <location>
        <position position="168"/>
    </location>
</feature>
<feature type="sequence conflict" description="In Ref. 5; AAH22501." evidence="8" ref="5">
    <original>K</original>
    <variation>R</variation>
    <location>
        <position position="367"/>
    </location>
</feature>
<proteinExistence type="evidence at protein level"/>
<reference key="1">
    <citation type="journal article" date="1998" name="Eur. J. Pharmacol.">
        <title>Neurotensin is an antagonist of the human neurotensin NT2 receptor expressed in Chinese hamster ovary cells.</title>
        <authorList>
            <person name="Vita N."/>
            <person name="Oury-Donat F."/>
            <person name="Chalon P."/>
            <person name="Guillemot M."/>
            <person name="Kaghad M."/>
            <person name="Bachy A."/>
            <person name="Thurneyssen S."/>
            <person name="Garcia S."/>
            <person name="Poinot-Chazel C."/>
            <person name="Casellas P."/>
            <person name="Keane P."/>
            <person name="Le Fur G."/>
            <person name="Maffrand J.-P."/>
            <person name="Shoubrie P."/>
            <person name="Caput D."/>
            <person name="Ferrara P."/>
        </authorList>
    </citation>
    <scope>NUCLEOTIDE SEQUENCE [MRNA]</scope>
    <scope>VARIANT VAL-54</scope>
    <source>
        <tissue>Brain</tissue>
    </source>
</reference>
<reference key="2">
    <citation type="submission" date="2003-10" db="EMBL/GenBank/DDBJ databases">
        <title>cDNA clones of human proteins involved in signal transduction sequenced by the Guthrie cDNA resource center (www.cdna.org).</title>
        <authorList>
            <person name="Kopatz S.A."/>
            <person name="Aronstam R.S."/>
            <person name="Sharma S.V."/>
        </authorList>
    </citation>
    <scope>NUCLEOTIDE SEQUENCE [LARGE SCALE MRNA]</scope>
    <scope>VARIANT VAL-54</scope>
    <source>
        <tissue>Brain</tissue>
    </source>
</reference>
<reference key="3">
    <citation type="journal article" date="2005" name="Nature">
        <title>Generation and annotation of the DNA sequences of human chromosomes 2 and 4.</title>
        <authorList>
            <person name="Hillier L.W."/>
            <person name="Graves T.A."/>
            <person name="Fulton R.S."/>
            <person name="Fulton L.A."/>
            <person name="Pepin K.H."/>
            <person name="Minx P."/>
            <person name="Wagner-McPherson C."/>
            <person name="Layman D."/>
            <person name="Wylie K."/>
            <person name="Sekhon M."/>
            <person name="Becker M.C."/>
            <person name="Fewell G.A."/>
            <person name="Delehaunty K.D."/>
            <person name="Miner T.L."/>
            <person name="Nash W.E."/>
            <person name="Kremitzki C."/>
            <person name="Oddy L."/>
            <person name="Du H."/>
            <person name="Sun H."/>
            <person name="Bradshaw-Cordum H."/>
            <person name="Ali J."/>
            <person name="Carter J."/>
            <person name="Cordes M."/>
            <person name="Harris A."/>
            <person name="Isak A."/>
            <person name="van Brunt A."/>
            <person name="Nguyen C."/>
            <person name="Du F."/>
            <person name="Courtney L."/>
            <person name="Kalicki J."/>
            <person name="Ozersky P."/>
            <person name="Abbott S."/>
            <person name="Armstrong J."/>
            <person name="Belter E.A."/>
            <person name="Caruso L."/>
            <person name="Cedroni M."/>
            <person name="Cotton M."/>
            <person name="Davidson T."/>
            <person name="Desai A."/>
            <person name="Elliott G."/>
            <person name="Erb T."/>
            <person name="Fronick C."/>
            <person name="Gaige T."/>
            <person name="Haakenson W."/>
            <person name="Haglund K."/>
            <person name="Holmes A."/>
            <person name="Harkins R."/>
            <person name="Kim K."/>
            <person name="Kruchowski S.S."/>
            <person name="Strong C.M."/>
            <person name="Grewal N."/>
            <person name="Goyea E."/>
            <person name="Hou S."/>
            <person name="Levy A."/>
            <person name="Martinka S."/>
            <person name="Mead K."/>
            <person name="McLellan M.D."/>
            <person name="Meyer R."/>
            <person name="Randall-Maher J."/>
            <person name="Tomlinson C."/>
            <person name="Dauphin-Kohlberg S."/>
            <person name="Kozlowicz-Reilly A."/>
            <person name="Shah N."/>
            <person name="Swearengen-Shahid S."/>
            <person name="Snider J."/>
            <person name="Strong J.T."/>
            <person name="Thompson J."/>
            <person name="Yoakum M."/>
            <person name="Leonard S."/>
            <person name="Pearman C."/>
            <person name="Trani L."/>
            <person name="Radionenko M."/>
            <person name="Waligorski J.E."/>
            <person name="Wang C."/>
            <person name="Rock S.M."/>
            <person name="Tin-Wollam A.-M."/>
            <person name="Maupin R."/>
            <person name="Latreille P."/>
            <person name="Wendl M.C."/>
            <person name="Yang S.-P."/>
            <person name="Pohl C."/>
            <person name="Wallis J.W."/>
            <person name="Spieth J."/>
            <person name="Bieri T.A."/>
            <person name="Berkowicz N."/>
            <person name="Nelson J.O."/>
            <person name="Osborne J."/>
            <person name="Ding L."/>
            <person name="Meyer R."/>
            <person name="Sabo A."/>
            <person name="Shotland Y."/>
            <person name="Sinha P."/>
            <person name="Wohldmann P.E."/>
            <person name="Cook L.L."/>
            <person name="Hickenbotham M.T."/>
            <person name="Eldred J."/>
            <person name="Williams D."/>
            <person name="Jones T.A."/>
            <person name="She X."/>
            <person name="Ciccarelli F.D."/>
            <person name="Izaurralde E."/>
            <person name="Taylor J."/>
            <person name="Schmutz J."/>
            <person name="Myers R.M."/>
            <person name="Cox D.R."/>
            <person name="Huang X."/>
            <person name="McPherson J.D."/>
            <person name="Mardis E.R."/>
            <person name="Clifton S.W."/>
            <person name="Warren W.C."/>
            <person name="Chinwalla A.T."/>
            <person name="Eddy S.R."/>
            <person name="Marra M.A."/>
            <person name="Ovcharenko I."/>
            <person name="Furey T.S."/>
            <person name="Miller W."/>
            <person name="Eichler E.E."/>
            <person name="Bork P."/>
            <person name="Suyama M."/>
            <person name="Torrents D."/>
            <person name="Waterston R.H."/>
            <person name="Wilson R.K."/>
        </authorList>
    </citation>
    <scope>NUCLEOTIDE SEQUENCE [LARGE SCALE GENOMIC DNA]</scope>
</reference>
<reference key="4">
    <citation type="submission" date="2005-07" db="EMBL/GenBank/DDBJ databases">
        <authorList>
            <person name="Mural R.J."/>
            <person name="Istrail S."/>
            <person name="Sutton G.G."/>
            <person name="Florea L."/>
            <person name="Halpern A.L."/>
            <person name="Mobarry C.M."/>
            <person name="Lippert R."/>
            <person name="Walenz B."/>
            <person name="Shatkay H."/>
            <person name="Dew I."/>
            <person name="Miller J.R."/>
            <person name="Flanigan M.J."/>
            <person name="Edwards N.J."/>
            <person name="Bolanos R."/>
            <person name="Fasulo D."/>
            <person name="Halldorsson B.V."/>
            <person name="Hannenhalli S."/>
            <person name="Turner R."/>
            <person name="Yooseph S."/>
            <person name="Lu F."/>
            <person name="Nusskern D.R."/>
            <person name="Shue B.C."/>
            <person name="Zheng X.H."/>
            <person name="Zhong F."/>
            <person name="Delcher A.L."/>
            <person name="Huson D.H."/>
            <person name="Kravitz S.A."/>
            <person name="Mouchard L."/>
            <person name="Reinert K."/>
            <person name="Remington K.A."/>
            <person name="Clark A.G."/>
            <person name="Waterman M.S."/>
            <person name="Eichler E.E."/>
            <person name="Adams M.D."/>
            <person name="Hunkapiller M.W."/>
            <person name="Myers E.W."/>
            <person name="Venter J.C."/>
        </authorList>
    </citation>
    <scope>NUCLEOTIDE SEQUENCE [LARGE SCALE GENOMIC DNA]</scope>
</reference>
<reference key="5">
    <citation type="journal article" date="2004" name="Genome Res.">
        <title>The status, quality, and expansion of the NIH full-length cDNA project: the Mammalian Gene Collection (MGC).</title>
        <authorList>
            <consortium name="The MGC Project Team"/>
        </authorList>
    </citation>
    <scope>NUCLEOTIDE SEQUENCE [LARGE SCALE MRNA]</scope>
    <scope>VARIANT VAL-54</scope>
    <source>
        <tissue>Brain</tissue>
    </source>
</reference>
<reference key="6">
    <citation type="journal article" date="2010" name="Cancer Res.">
        <title>Altered expression of neurotensin receptors is associated with the differentiation state of prostate cancer.</title>
        <authorList>
            <person name="Swift S.L."/>
            <person name="Burns J.E."/>
            <person name="Maitland N.J."/>
        </authorList>
    </citation>
    <scope>TISSUE SPECIFICITY</scope>
</reference>
<organism>
    <name type="scientific">Homo sapiens</name>
    <name type="common">Human</name>
    <dbReference type="NCBI Taxonomy" id="9606"/>
    <lineage>
        <taxon>Eukaryota</taxon>
        <taxon>Metazoa</taxon>
        <taxon>Chordata</taxon>
        <taxon>Craniata</taxon>
        <taxon>Vertebrata</taxon>
        <taxon>Euteleostomi</taxon>
        <taxon>Mammalia</taxon>
        <taxon>Eutheria</taxon>
        <taxon>Euarchontoglires</taxon>
        <taxon>Primates</taxon>
        <taxon>Haplorrhini</taxon>
        <taxon>Catarrhini</taxon>
        <taxon>Hominidae</taxon>
        <taxon>Homo</taxon>
    </lineage>
</organism>
<name>NTR2_HUMAN</name>
<protein>
    <recommendedName>
        <fullName>Neurotensin receptor type 2</fullName>
        <shortName>NT-R-2</shortName>
        <shortName>NTR2</shortName>
    </recommendedName>
    <alternativeName>
        <fullName>Levocabastine-sensitive neurotensin receptor</fullName>
    </alternativeName>
</protein>
<evidence type="ECO:0000255" key="1"/>
<evidence type="ECO:0000255" key="2">
    <source>
        <dbReference type="PROSITE-ProRule" id="PRU00521"/>
    </source>
</evidence>
<evidence type="ECO:0000256" key="3">
    <source>
        <dbReference type="SAM" id="MobiDB-lite"/>
    </source>
</evidence>
<evidence type="ECO:0000269" key="4">
    <source>
    </source>
</evidence>
<evidence type="ECO:0000269" key="5">
    <source>
    </source>
</evidence>
<evidence type="ECO:0000269" key="6">
    <source>
    </source>
</evidence>
<evidence type="ECO:0000269" key="7">
    <source ref="2"/>
</evidence>
<evidence type="ECO:0000305" key="8"/>
<accession>O95665</accession>
<accession>Q53QQ5</accession>
<accession>Q57Z87</accession>
<accession>Q8IY58</accession>
<accession>Q8TBH6</accession>
<dbReference type="EMBL" id="Y10148">
    <property type="protein sequence ID" value="CAA71233.1"/>
    <property type="molecule type" value="mRNA"/>
</dbReference>
<dbReference type="EMBL" id="AY429107">
    <property type="protein sequence ID" value="AAR07902.1"/>
    <property type="molecule type" value="mRNA"/>
</dbReference>
<dbReference type="EMBL" id="AC106875">
    <property type="protein sequence ID" value="AAY14691.1"/>
    <property type="molecule type" value="Genomic_DNA"/>
</dbReference>
<dbReference type="EMBL" id="AC110754">
    <property type="protein sequence ID" value="AAX82018.1"/>
    <property type="molecule type" value="Genomic_DNA"/>
</dbReference>
<dbReference type="EMBL" id="CH471053">
    <property type="protein sequence ID" value="EAX00924.1"/>
    <property type="status" value="ALT_SEQ"/>
    <property type="molecule type" value="Genomic_DNA"/>
</dbReference>
<dbReference type="EMBL" id="BC022501">
    <property type="protein sequence ID" value="AAH22501.1"/>
    <property type="molecule type" value="mRNA"/>
</dbReference>
<dbReference type="EMBL" id="BC037776">
    <property type="protein sequence ID" value="AAH37776.1"/>
    <property type="molecule type" value="mRNA"/>
</dbReference>
<dbReference type="CCDS" id="CCDS1681.1"/>
<dbReference type="RefSeq" id="NP_036476.2">
    <property type="nucleotide sequence ID" value="NM_012344.4"/>
</dbReference>
<dbReference type="SMR" id="O95665"/>
<dbReference type="BioGRID" id="117153">
    <property type="interactions" value="1"/>
</dbReference>
<dbReference type="CORUM" id="O95665"/>
<dbReference type="FunCoup" id="O95665">
    <property type="interactions" value="578"/>
</dbReference>
<dbReference type="STRING" id="9606.ENSP00000303686"/>
<dbReference type="BindingDB" id="O95665"/>
<dbReference type="ChEMBL" id="CHEMBL2514"/>
<dbReference type="DrugBank" id="DB01106">
    <property type="generic name" value="Levocabastine"/>
</dbReference>
<dbReference type="DrugCentral" id="O95665"/>
<dbReference type="GuidetoPHARMACOLOGY" id="310"/>
<dbReference type="TCDB" id="9.A.14.1.20">
    <property type="family name" value="the g-protein-coupled receptor (gpcr) family"/>
</dbReference>
<dbReference type="GlyGen" id="O95665">
    <property type="glycosylation" value="2 sites"/>
</dbReference>
<dbReference type="iPTMnet" id="O95665"/>
<dbReference type="PhosphoSitePlus" id="O95665"/>
<dbReference type="BioMuta" id="NTSR2"/>
<dbReference type="MassIVE" id="O95665"/>
<dbReference type="PaxDb" id="9606-ENSP00000303686"/>
<dbReference type="PeptideAtlas" id="O95665"/>
<dbReference type="ProteomicsDB" id="50982"/>
<dbReference type="Antibodypedia" id="12728">
    <property type="antibodies" value="290 antibodies from 29 providers"/>
</dbReference>
<dbReference type="DNASU" id="23620"/>
<dbReference type="Ensembl" id="ENST00000306928.6">
    <property type="protein sequence ID" value="ENSP00000303686.5"/>
    <property type="gene ID" value="ENSG00000169006.7"/>
</dbReference>
<dbReference type="GeneID" id="23620"/>
<dbReference type="KEGG" id="hsa:23620"/>
<dbReference type="MANE-Select" id="ENST00000306928.6">
    <property type="protein sequence ID" value="ENSP00000303686.5"/>
    <property type="RefSeq nucleotide sequence ID" value="NM_012344.4"/>
    <property type="RefSeq protein sequence ID" value="NP_036476.2"/>
</dbReference>
<dbReference type="UCSC" id="uc002rbq.5">
    <property type="organism name" value="human"/>
</dbReference>
<dbReference type="AGR" id="HGNC:8040"/>
<dbReference type="CTD" id="23620"/>
<dbReference type="DisGeNET" id="23620"/>
<dbReference type="GeneCards" id="NTSR2"/>
<dbReference type="HGNC" id="HGNC:8040">
    <property type="gene designation" value="NTSR2"/>
</dbReference>
<dbReference type="HPA" id="ENSG00000169006">
    <property type="expression patterns" value="Tissue enriched (brain)"/>
</dbReference>
<dbReference type="MIM" id="605538">
    <property type="type" value="gene"/>
</dbReference>
<dbReference type="neXtProt" id="NX_O95665"/>
<dbReference type="OpenTargets" id="ENSG00000169006"/>
<dbReference type="PharmGKB" id="PA31822"/>
<dbReference type="VEuPathDB" id="HostDB:ENSG00000169006"/>
<dbReference type="eggNOG" id="KOG3656">
    <property type="taxonomic scope" value="Eukaryota"/>
</dbReference>
<dbReference type="GeneTree" id="ENSGT01120000271823"/>
<dbReference type="HOGENOM" id="CLU_009579_6_5_1"/>
<dbReference type="InParanoid" id="O95665"/>
<dbReference type="OMA" id="YSFRLWG"/>
<dbReference type="OrthoDB" id="9835116at2759"/>
<dbReference type="PAN-GO" id="O95665">
    <property type="GO annotations" value="3 GO annotations based on evolutionary models"/>
</dbReference>
<dbReference type="PhylomeDB" id="O95665"/>
<dbReference type="TreeFam" id="TF337167"/>
<dbReference type="PathwayCommons" id="O95665"/>
<dbReference type="Reactome" id="R-HSA-375276">
    <property type="pathway name" value="Peptide ligand-binding receptors"/>
</dbReference>
<dbReference type="Reactome" id="R-HSA-416476">
    <property type="pathway name" value="G alpha (q) signalling events"/>
</dbReference>
<dbReference type="SignaLink" id="O95665"/>
<dbReference type="SIGNOR" id="O95665"/>
<dbReference type="BioGRID-ORCS" id="23620">
    <property type="hits" value="14 hits in 1150 CRISPR screens"/>
</dbReference>
<dbReference type="GeneWiki" id="Neurotensin_receptor_2"/>
<dbReference type="GenomeRNAi" id="23620"/>
<dbReference type="Pharos" id="O95665">
    <property type="development level" value="Tchem"/>
</dbReference>
<dbReference type="PRO" id="PR:O95665"/>
<dbReference type="Proteomes" id="UP000005640">
    <property type="component" value="Chromosome 2"/>
</dbReference>
<dbReference type="RNAct" id="O95665">
    <property type="molecule type" value="protein"/>
</dbReference>
<dbReference type="Bgee" id="ENSG00000169006">
    <property type="expression patterns" value="Expressed in nucleus accumbens and 83 other cell types or tissues"/>
</dbReference>
<dbReference type="GO" id="GO:0005886">
    <property type="term" value="C:plasma membrane"/>
    <property type="evidence" value="ECO:0000318"/>
    <property type="project" value="GO_Central"/>
</dbReference>
<dbReference type="GO" id="GO:0016492">
    <property type="term" value="F:G protein-coupled neurotensin receptor activity"/>
    <property type="evidence" value="ECO:0000318"/>
    <property type="project" value="GO_Central"/>
</dbReference>
<dbReference type="GO" id="GO:0004930">
    <property type="term" value="F:G protein-coupled receptor activity"/>
    <property type="evidence" value="ECO:0000304"/>
    <property type="project" value="ProtInc"/>
</dbReference>
<dbReference type="GO" id="GO:0007166">
    <property type="term" value="P:cell surface receptor signaling pathway"/>
    <property type="evidence" value="ECO:0000304"/>
    <property type="project" value="ProtInc"/>
</dbReference>
<dbReference type="GO" id="GO:0007218">
    <property type="term" value="P:neuropeptide signaling pathway"/>
    <property type="evidence" value="ECO:0000318"/>
    <property type="project" value="GO_Central"/>
</dbReference>
<dbReference type="GO" id="GO:0007200">
    <property type="term" value="P:phospholipase C-activating G protein-coupled receptor signaling pathway"/>
    <property type="evidence" value="ECO:0007669"/>
    <property type="project" value="Ensembl"/>
</dbReference>
<dbReference type="GO" id="GO:0042391">
    <property type="term" value="P:regulation of membrane potential"/>
    <property type="evidence" value="ECO:0007669"/>
    <property type="project" value="Ensembl"/>
</dbReference>
<dbReference type="GO" id="GO:0007600">
    <property type="term" value="P:sensory perception"/>
    <property type="evidence" value="ECO:0000304"/>
    <property type="project" value="ProtInc"/>
</dbReference>
<dbReference type="Gene3D" id="1.20.1070.10">
    <property type="entry name" value="Rhodopsin 7-helix transmembrane proteins"/>
    <property type="match status" value="1"/>
</dbReference>
<dbReference type="InterPro" id="IPR000276">
    <property type="entry name" value="GPCR_Rhodpsn"/>
</dbReference>
<dbReference type="InterPro" id="IPR017452">
    <property type="entry name" value="GPCR_Rhodpsn_7TM"/>
</dbReference>
<dbReference type="InterPro" id="IPR003986">
    <property type="entry name" value="NT2_rcpt"/>
</dbReference>
<dbReference type="InterPro" id="IPR003984">
    <property type="entry name" value="NT_rcpt"/>
</dbReference>
<dbReference type="PANTHER" id="PTHR24243">
    <property type="entry name" value="G-PROTEIN COUPLED RECEPTOR"/>
    <property type="match status" value="1"/>
</dbReference>
<dbReference type="PANTHER" id="PTHR24243:SF10">
    <property type="entry name" value="NEUROTENSIN RECEPTOR TYPE 2"/>
    <property type="match status" value="1"/>
</dbReference>
<dbReference type="Pfam" id="PF00001">
    <property type="entry name" value="7tm_1"/>
    <property type="match status" value="1"/>
</dbReference>
<dbReference type="PRINTS" id="PR00237">
    <property type="entry name" value="GPCRRHODOPSN"/>
</dbReference>
<dbReference type="PRINTS" id="PR01479">
    <property type="entry name" value="NEUROTENSINR"/>
</dbReference>
<dbReference type="PRINTS" id="PR01481">
    <property type="entry name" value="NEUROTENSN2R"/>
</dbReference>
<dbReference type="SUPFAM" id="SSF81321">
    <property type="entry name" value="Family A G protein-coupled receptor-like"/>
    <property type="match status" value="1"/>
</dbReference>
<dbReference type="PROSITE" id="PS00237">
    <property type="entry name" value="G_PROTEIN_RECEP_F1_1"/>
    <property type="match status" value="1"/>
</dbReference>
<dbReference type="PROSITE" id="PS50262">
    <property type="entry name" value="G_PROTEIN_RECEP_F1_2"/>
    <property type="match status" value="1"/>
</dbReference>
<sequence>METSSPRPPRPSSNPGLSLDARLGVDTRLWAKVLFTALYALIWALGAAGNALSAHVVLKARAGRAGRLRHHVLSLALAGLLLLLVGVPVELYSFVWFHYPWVFGDLGCRGYYFVHELCAYATVLSVAGLSAERCLAVCQPLRARSLLTPRRTRWLVALSWAASLGLALPMAVIMGQKHELETADGEPEPASRVCTVLVSRTALQVFIQVNVLVSFVLPLALTAFLNGVTVSHLLALCSQVPSTSTPGSSTPSRLELLSEEGLLSFIVWKKTFIQGGQVSLVRHKDVRRIRSLQRSVQVLRAIVVMYVICWLPYHARRLMYCYVPDDAWTDPLYNFYHYFYMVTNTLFYVSSAVTPLLYNAVSSSFRKLFLEAVSSLCGEHHPMKRLPPKPQSPTLMDTASGFGDPPETRT</sequence>
<gene>
    <name type="primary">NTSR2</name>
</gene>
<keyword id="KW-1003">Cell membrane</keyword>
<keyword id="KW-1015">Disulfide bond</keyword>
<keyword id="KW-0297">G-protein coupled receptor</keyword>
<keyword id="KW-0449">Lipoprotein</keyword>
<keyword id="KW-0472">Membrane</keyword>
<keyword id="KW-0564">Palmitate</keyword>
<keyword id="KW-0675">Receptor</keyword>
<keyword id="KW-1185">Reference proteome</keyword>
<keyword id="KW-0807">Transducer</keyword>
<keyword id="KW-0812">Transmembrane</keyword>
<keyword id="KW-1133">Transmembrane helix</keyword>